<proteinExistence type="inferred from homology"/>
<protein>
    <recommendedName>
        <fullName evidence="1">Polyribonucleotide nucleotidyltransferase</fullName>
        <ecNumber evidence="1">2.7.7.8</ecNumber>
    </recommendedName>
    <alternativeName>
        <fullName evidence="1">Polynucleotide phosphorylase</fullName>
        <shortName evidence="1">PNPase</shortName>
    </alternativeName>
</protein>
<accession>B0TQ97</accession>
<evidence type="ECO:0000255" key="1">
    <source>
        <dbReference type="HAMAP-Rule" id="MF_01595"/>
    </source>
</evidence>
<name>PNP_SHEHH</name>
<gene>
    <name evidence="1" type="primary">pnp</name>
    <name type="ordered locus">Shal_3142</name>
</gene>
<sequence length="704" mass="75841">MVHVNPIVKSFEYGQHTVTLETGVIARQADAAVLASMGDTTVLVTVVGKKFEEPGRDFFPLTVNYQEKTYAAGKIPGGFFKREGRPSEGETLTARLIDRPIRPLFPNGFKNEVQVIITVVSVDPEISPEVISMIGTSAALSISGIPFNGPLGSARVGYVNGEYILNPTVSQLVDSQLELSVAGTDSAVLMVESEASALPEEVMLGAVVYGHDQQQVVIQAIKELQAEVNKPVWDWAAPVQDETLVAKIKDLAEAGLTEAYQIEVKQDRYAQVGVVKNAAKEALLAENPDANTREIDGLLGSLEKKVVRGRIIAGNPRIDGREPDMVRALNVMAGVLPRTHGSSLFTRGETQALVTCTLGTERDAQKIDSIMGEYTNRFMLHYNFPPYSVGETGMVGSPKRREIGHGKLAWRGINAVMPTAEEFPYSVRIVSEITESNGSSSMASVCGTSLALMDAGVPIKTSVAGIAMGLVKEGDDFVVLSDILGDEDHLGDMDFKVAGTRDGITALQMDIKIEGITKEIMQIALQQAYGARVHILNVMDQAIGSHRGDISEHAPRITTIKINPEKIRDVIGKGGATIRALTEETGTTIELDDDGTVKIASSNGEATKEAIRRIEEITAEVEVGTVYNGKVVRIVDFGAFVTILPGKDGLVHISQIAEERVANVSDYLEVGQEVKVKVMEVDRQGRVRLSMKEAAPKADAPAAE</sequence>
<keyword id="KW-0963">Cytoplasm</keyword>
<keyword id="KW-0460">Magnesium</keyword>
<keyword id="KW-0479">Metal-binding</keyword>
<keyword id="KW-0548">Nucleotidyltransferase</keyword>
<keyword id="KW-0694">RNA-binding</keyword>
<keyword id="KW-0808">Transferase</keyword>
<dbReference type="EC" id="2.7.7.8" evidence="1"/>
<dbReference type="EMBL" id="CP000931">
    <property type="protein sequence ID" value="ABZ77689.1"/>
    <property type="molecule type" value="Genomic_DNA"/>
</dbReference>
<dbReference type="SMR" id="B0TQ97"/>
<dbReference type="STRING" id="458817.Shal_3142"/>
<dbReference type="KEGG" id="shl:Shal_3142"/>
<dbReference type="eggNOG" id="COG1185">
    <property type="taxonomic scope" value="Bacteria"/>
</dbReference>
<dbReference type="HOGENOM" id="CLU_004217_2_2_6"/>
<dbReference type="Proteomes" id="UP000001317">
    <property type="component" value="Chromosome"/>
</dbReference>
<dbReference type="GO" id="GO:0005829">
    <property type="term" value="C:cytosol"/>
    <property type="evidence" value="ECO:0007669"/>
    <property type="project" value="TreeGrafter"/>
</dbReference>
<dbReference type="GO" id="GO:0000175">
    <property type="term" value="F:3'-5'-RNA exonuclease activity"/>
    <property type="evidence" value="ECO:0007669"/>
    <property type="project" value="TreeGrafter"/>
</dbReference>
<dbReference type="GO" id="GO:0000287">
    <property type="term" value="F:magnesium ion binding"/>
    <property type="evidence" value="ECO:0007669"/>
    <property type="project" value="UniProtKB-UniRule"/>
</dbReference>
<dbReference type="GO" id="GO:0004654">
    <property type="term" value="F:polyribonucleotide nucleotidyltransferase activity"/>
    <property type="evidence" value="ECO:0007669"/>
    <property type="project" value="UniProtKB-UniRule"/>
</dbReference>
<dbReference type="GO" id="GO:0003723">
    <property type="term" value="F:RNA binding"/>
    <property type="evidence" value="ECO:0007669"/>
    <property type="project" value="UniProtKB-UniRule"/>
</dbReference>
<dbReference type="GO" id="GO:0006402">
    <property type="term" value="P:mRNA catabolic process"/>
    <property type="evidence" value="ECO:0007669"/>
    <property type="project" value="UniProtKB-UniRule"/>
</dbReference>
<dbReference type="GO" id="GO:0006396">
    <property type="term" value="P:RNA processing"/>
    <property type="evidence" value="ECO:0007669"/>
    <property type="project" value="InterPro"/>
</dbReference>
<dbReference type="CDD" id="cd02393">
    <property type="entry name" value="KH-I_PNPase"/>
    <property type="match status" value="1"/>
</dbReference>
<dbReference type="CDD" id="cd11363">
    <property type="entry name" value="RNase_PH_PNPase_1"/>
    <property type="match status" value="1"/>
</dbReference>
<dbReference type="CDD" id="cd11364">
    <property type="entry name" value="RNase_PH_PNPase_2"/>
    <property type="match status" value="1"/>
</dbReference>
<dbReference type="CDD" id="cd04472">
    <property type="entry name" value="S1_PNPase"/>
    <property type="match status" value="1"/>
</dbReference>
<dbReference type="FunFam" id="2.40.50.140:FF:000023">
    <property type="entry name" value="Polyribonucleotide nucleotidyltransferase"/>
    <property type="match status" value="1"/>
</dbReference>
<dbReference type="FunFam" id="3.30.1370.10:FF:000001">
    <property type="entry name" value="Polyribonucleotide nucleotidyltransferase"/>
    <property type="match status" value="1"/>
</dbReference>
<dbReference type="FunFam" id="3.30.230.70:FF:000001">
    <property type="entry name" value="Polyribonucleotide nucleotidyltransferase"/>
    <property type="match status" value="1"/>
</dbReference>
<dbReference type="FunFam" id="3.30.230.70:FF:000002">
    <property type="entry name" value="Polyribonucleotide nucleotidyltransferase"/>
    <property type="match status" value="1"/>
</dbReference>
<dbReference type="Gene3D" id="3.30.230.70">
    <property type="entry name" value="GHMP Kinase, N-terminal domain"/>
    <property type="match status" value="2"/>
</dbReference>
<dbReference type="Gene3D" id="3.30.1370.10">
    <property type="entry name" value="K Homology domain, type 1"/>
    <property type="match status" value="1"/>
</dbReference>
<dbReference type="Gene3D" id="2.40.50.140">
    <property type="entry name" value="Nucleic acid-binding proteins"/>
    <property type="match status" value="1"/>
</dbReference>
<dbReference type="HAMAP" id="MF_01595">
    <property type="entry name" value="PNPase"/>
    <property type="match status" value="1"/>
</dbReference>
<dbReference type="InterPro" id="IPR001247">
    <property type="entry name" value="ExoRNase_PH_dom1"/>
</dbReference>
<dbReference type="InterPro" id="IPR015847">
    <property type="entry name" value="ExoRNase_PH_dom2"/>
</dbReference>
<dbReference type="InterPro" id="IPR036345">
    <property type="entry name" value="ExoRNase_PH_dom2_sf"/>
</dbReference>
<dbReference type="InterPro" id="IPR004087">
    <property type="entry name" value="KH_dom"/>
</dbReference>
<dbReference type="InterPro" id="IPR004088">
    <property type="entry name" value="KH_dom_type_1"/>
</dbReference>
<dbReference type="InterPro" id="IPR036612">
    <property type="entry name" value="KH_dom_type_1_sf"/>
</dbReference>
<dbReference type="InterPro" id="IPR012340">
    <property type="entry name" value="NA-bd_OB-fold"/>
</dbReference>
<dbReference type="InterPro" id="IPR012162">
    <property type="entry name" value="PNPase"/>
</dbReference>
<dbReference type="InterPro" id="IPR027408">
    <property type="entry name" value="PNPase/RNase_PH_dom_sf"/>
</dbReference>
<dbReference type="InterPro" id="IPR015848">
    <property type="entry name" value="PNPase_PH_RNA-bd_bac/org-type"/>
</dbReference>
<dbReference type="InterPro" id="IPR036456">
    <property type="entry name" value="PNPase_PH_RNA-bd_sf"/>
</dbReference>
<dbReference type="InterPro" id="IPR020568">
    <property type="entry name" value="Ribosomal_Su5_D2-typ_SF"/>
</dbReference>
<dbReference type="InterPro" id="IPR003029">
    <property type="entry name" value="S1_domain"/>
</dbReference>
<dbReference type="NCBIfam" id="TIGR03591">
    <property type="entry name" value="polynuc_phos"/>
    <property type="match status" value="1"/>
</dbReference>
<dbReference type="NCBIfam" id="NF008805">
    <property type="entry name" value="PRK11824.1"/>
    <property type="match status" value="1"/>
</dbReference>
<dbReference type="PANTHER" id="PTHR11252">
    <property type="entry name" value="POLYRIBONUCLEOTIDE NUCLEOTIDYLTRANSFERASE"/>
    <property type="match status" value="1"/>
</dbReference>
<dbReference type="PANTHER" id="PTHR11252:SF0">
    <property type="entry name" value="POLYRIBONUCLEOTIDE NUCLEOTIDYLTRANSFERASE 1, MITOCHONDRIAL"/>
    <property type="match status" value="1"/>
</dbReference>
<dbReference type="Pfam" id="PF00013">
    <property type="entry name" value="KH_1"/>
    <property type="match status" value="1"/>
</dbReference>
<dbReference type="Pfam" id="PF03726">
    <property type="entry name" value="PNPase"/>
    <property type="match status" value="1"/>
</dbReference>
<dbReference type="Pfam" id="PF01138">
    <property type="entry name" value="RNase_PH"/>
    <property type="match status" value="2"/>
</dbReference>
<dbReference type="Pfam" id="PF03725">
    <property type="entry name" value="RNase_PH_C"/>
    <property type="match status" value="2"/>
</dbReference>
<dbReference type="Pfam" id="PF00575">
    <property type="entry name" value="S1"/>
    <property type="match status" value="1"/>
</dbReference>
<dbReference type="PIRSF" id="PIRSF005499">
    <property type="entry name" value="PNPase"/>
    <property type="match status" value="1"/>
</dbReference>
<dbReference type="SMART" id="SM00322">
    <property type="entry name" value="KH"/>
    <property type="match status" value="1"/>
</dbReference>
<dbReference type="SMART" id="SM00316">
    <property type="entry name" value="S1"/>
    <property type="match status" value="1"/>
</dbReference>
<dbReference type="SUPFAM" id="SSF54791">
    <property type="entry name" value="Eukaryotic type KH-domain (KH-domain type I)"/>
    <property type="match status" value="1"/>
</dbReference>
<dbReference type="SUPFAM" id="SSF50249">
    <property type="entry name" value="Nucleic acid-binding proteins"/>
    <property type="match status" value="1"/>
</dbReference>
<dbReference type="SUPFAM" id="SSF46915">
    <property type="entry name" value="Polynucleotide phosphorylase/guanosine pentaphosphate synthase (PNPase/GPSI), domain 3"/>
    <property type="match status" value="1"/>
</dbReference>
<dbReference type="SUPFAM" id="SSF55666">
    <property type="entry name" value="Ribonuclease PH domain 2-like"/>
    <property type="match status" value="2"/>
</dbReference>
<dbReference type="SUPFAM" id="SSF54211">
    <property type="entry name" value="Ribosomal protein S5 domain 2-like"/>
    <property type="match status" value="2"/>
</dbReference>
<dbReference type="PROSITE" id="PS50084">
    <property type="entry name" value="KH_TYPE_1"/>
    <property type="match status" value="1"/>
</dbReference>
<dbReference type="PROSITE" id="PS50126">
    <property type="entry name" value="S1"/>
    <property type="match status" value="1"/>
</dbReference>
<comment type="function">
    <text evidence="1">Involved in mRNA degradation. Catalyzes the phosphorolysis of single-stranded polyribonucleotides processively in the 3'- to 5'-direction.</text>
</comment>
<comment type="catalytic activity">
    <reaction evidence="1">
        <text>RNA(n+1) + phosphate = RNA(n) + a ribonucleoside 5'-diphosphate</text>
        <dbReference type="Rhea" id="RHEA:22096"/>
        <dbReference type="Rhea" id="RHEA-COMP:14527"/>
        <dbReference type="Rhea" id="RHEA-COMP:17342"/>
        <dbReference type="ChEBI" id="CHEBI:43474"/>
        <dbReference type="ChEBI" id="CHEBI:57930"/>
        <dbReference type="ChEBI" id="CHEBI:140395"/>
        <dbReference type="EC" id="2.7.7.8"/>
    </reaction>
</comment>
<comment type="cofactor">
    <cofactor evidence="1">
        <name>Mg(2+)</name>
        <dbReference type="ChEBI" id="CHEBI:18420"/>
    </cofactor>
</comment>
<comment type="subunit">
    <text evidence="1">Component of the RNA degradosome, which is a multiprotein complex involved in RNA processing and mRNA degradation.</text>
</comment>
<comment type="subcellular location">
    <subcellularLocation>
        <location evidence="1">Cytoplasm</location>
    </subcellularLocation>
</comment>
<comment type="similarity">
    <text evidence="1">Belongs to the polyribonucleotide nucleotidyltransferase family.</text>
</comment>
<reference key="1">
    <citation type="submission" date="2008-01" db="EMBL/GenBank/DDBJ databases">
        <title>Complete sequence of Shewanella halifaxensis HAW-EB4.</title>
        <authorList>
            <consortium name="US DOE Joint Genome Institute"/>
            <person name="Copeland A."/>
            <person name="Lucas S."/>
            <person name="Lapidus A."/>
            <person name="Glavina del Rio T."/>
            <person name="Dalin E."/>
            <person name="Tice H."/>
            <person name="Bruce D."/>
            <person name="Goodwin L."/>
            <person name="Pitluck S."/>
            <person name="Sims D."/>
            <person name="Brettin T."/>
            <person name="Detter J.C."/>
            <person name="Han C."/>
            <person name="Kuske C.R."/>
            <person name="Schmutz J."/>
            <person name="Larimer F."/>
            <person name="Land M."/>
            <person name="Hauser L."/>
            <person name="Kyrpides N."/>
            <person name="Kim E."/>
            <person name="Zhao J.-S."/>
            <person name="Richardson P."/>
        </authorList>
    </citation>
    <scope>NUCLEOTIDE SEQUENCE [LARGE SCALE GENOMIC DNA]</scope>
    <source>
        <strain>HAW-EB4</strain>
    </source>
</reference>
<organism>
    <name type="scientific">Shewanella halifaxensis (strain HAW-EB4)</name>
    <dbReference type="NCBI Taxonomy" id="458817"/>
    <lineage>
        <taxon>Bacteria</taxon>
        <taxon>Pseudomonadati</taxon>
        <taxon>Pseudomonadota</taxon>
        <taxon>Gammaproteobacteria</taxon>
        <taxon>Alteromonadales</taxon>
        <taxon>Shewanellaceae</taxon>
        <taxon>Shewanella</taxon>
    </lineage>
</organism>
<feature type="chain" id="PRO_0000381918" description="Polyribonucleotide nucleotidyltransferase">
    <location>
        <begin position="1"/>
        <end position="704"/>
    </location>
</feature>
<feature type="domain" description="KH" evidence="1">
    <location>
        <begin position="555"/>
        <end position="614"/>
    </location>
</feature>
<feature type="domain" description="S1 motif" evidence="1">
    <location>
        <begin position="624"/>
        <end position="692"/>
    </location>
</feature>
<feature type="binding site" evidence="1">
    <location>
        <position position="488"/>
    </location>
    <ligand>
        <name>Mg(2+)</name>
        <dbReference type="ChEBI" id="CHEBI:18420"/>
    </ligand>
</feature>
<feature type="binding site" evidence="1">
    <location>
        <position position="494"/>
    </location>
    <ligand>
        <name>Mg(2+)</name>
        <dbReference type="ChEBI" id="CHEBI:18420"/>
    </ligand>
</feature>